<organism>
    <name type="scientific">Influenza A virus (strain A/Udorn/307/1972 H3N2)</name>
    <dbReference type="NCBI Taxonomy" id="381517"/>
    <lineage>
        <taxon>Viruses</taxon>
        <taxon>Riboviria</taxon>
        <taxon>Orthornavirae</taxon>
        <taxon>Negarnaviricota</taxon>
        <taxon>Polyploviricotina</taxon>
        <taxon>Insthoviricetes</taxon>
        <taxon>Articulavirales</taxon>
        <taxon>Orthomyxoviridae</taxon>
        <taxon>Alphainfluenzavirus</taxon>
        <taxon>Alphainfluenzavirus influenzae</taxon>
        <taxon>Influenza A virus</taxon>
    </lineage>
</organism>
<gene>
    <name evidence="1" type="primary">M</name>
</gene>
<comment type="function">
    <text evidence="1">Plays critical roles in virus replication, from virus entry and uncoating to assembly and budding of the virus particle. M1 binding to ribonucleocapsids (RNPs) in nucleus seems to inhibit viral transcription. Interaction of viral NEP with M1-RNP is thought to promote nuclear export of the complex, which is targeted to the virion assembly site at the apical plasma membrane in polarized epithelial cells. Interactions with NA and HA may bring M1, a non-raft-associated protein, into lipid rafts. Forms a continuous shell on the inner side of the lipid bilayer in virion, where it binds the RNP. During virus entry into cell, the M2 ion channel acidifies the internal virion core, inducing M1 dissociation from the RNP. M1-free RNPs are transported to the nucleus, where viral transcription and replication can take place.</text>
</comment>
<comment type="function">
    <text evidence="1">Determines the virion's shape: spherical or filamentous. Clinical isolates of influenza are characterized by the presence of significant proportion of filamentous virions, whereas after multiple passage on eggs or cell culture, virions have only spherical morphology. Filamentous virions are thought to be important to infect neighboring cells, and spherical virions more suited to spread through aerosol between hosts organisms.</text>
</comment>
<comment type="subunit">
    <text evidence="1">Homodimer and homomultimer. Interacts with NEP. Binds ribonucleocapsid by both interacting with genomic RNA and NP protein. May interact with HA and NA. Cannot bind NP without genomic RNA.</text>
</comment>
<comment type="subcellular location">
    <subcellularLocation>
        <location evidence="1">Virion membrane</location>
        <topology evidence="1">Peripheral membrane protein</topology>
        <orientation evidence="1">Cytoplasmic side</orientation>
    </subcellularLocation>
    <subcellularLocation>
        <location evidence="1">Host nucleus</location>
    </subcellularLocation>
</comment>
<comment type="alternative products">
    <event type="alternative splicing"/>
    <isoform>
        <id>P0DOF4-1</id>
        <id>P03486-1</id>
        <id>P63233-1</id>
        <name>M1</name>
        <sequence type="displayed"/>
    </isoform>
    <isoform>
        <id>P0DOF5-1</id>
        <id>P03490-1</id>
        <id>P63231-1</id>
        <name>M2</name>
        <sequence type="external"/>
    </isoform>
    <text>Only the first 9 residues are shared by the 2 isoforms.</text>
</comment>
<comment type="miscellaneous">
    <text>Strain A/Udorn/307/72 is a laboratory-adapted strain.</text>
</comment>
<comment type="miscellaneous">
    <text evidence="1">Most abundant protein in virion. When expressed alone can form virus-like particles in transfected cells.</text>
</comment>
<comment type="similarity">
    <text evidence="1">Belongs to the influenza viruses Matrix protein M1 family.</text>
</comment>
<accession>P0DOF4</accession>
<accession>P03486</accession>
<accession>P10919</accession>
<accession>P63233</accession>
<accession>Q1K9D7</accession>
<protein>
    <recommendedName>
        <fullName evidence="1">Matrix protein 1</fullName>
        <shortName evidence="1">M1</shortName>
    </recommendedName>
</protein>
<name>M1_I72A2</name>
<reference key="1">
    <citation type="submission" date="2006-04" db="EMBL/GenBank/DDBJ databases">
        <title>Complete genome sequencing and analysis of selected influenza virus vaccine strains spanning six decades (1933-1999).</title>
        <authorList>
            <person name="Mbawuike I.N."/>
            <person name="Zhang Y."/>
            <person name="Yamada R.E."/>
            <person name="Nino D."/>
            <person name="Bui H.-H."/>
            <person name="Sette A."/>
            <person name="Couch R.B."/>
        </authorList>
    </citation>
    <scope>NUCLEOTIDE SEQUENCE [GENOMIC RNA]</scope>
</reference>
<feature type="chain" id="PRO_0000439955" description="Matrix protein 1">
    <location>
        <begin position="1"/>
        <end position="252"/>
    </location>
</feature>
<feature type="region of interest" description="Membrane-binding" evidence="1">
    <location>
        <begin position="1"/>
        <end position="164"/>
    </location>
</feature>
<feature type="region of interest" description="RNP-binding" evidence="1">
    <location>
        <begin position="165"/>
        <end position="252"/>
    </location>
</feature>
<feature type="short sequence motif" description="Nuclear localization signal" evidence="1">
    <location>
        <begin position="101"/>
        <end position="105"/>
    </location>
</feature>
<keyword id="KW-0025">Alternative splicing</keyword>
<keyword id="KW-1048">Host nucleus</keyword>
<keyword id="KW-0472">Membrane</keyword>
<keyword id="KW-0694">RNA-binding</keyword>
<keyword id="KW-0468">Viral matrix protein</keyword>
<keyword id="KW-0946">Virion</keyword>
<dbReference type="EMBL" id="DQ508932">
    <property type="protein sequence ID" value="ABF21322.1"/>
    <property type="molecule type" value="Genomic_RNA"/>
</dbReference>
<dbReference type="SMR" id="P0DOF4"/>
<dbReference type="IntAct" id="P0DOF4">
    <property type="interactions" value="5"/>
</dbReference>
<dbReference type="Proteomes" id="UP000153055">
    <property type="component" value="Genome"/>
</dbReference>
<dbReference type="GO" id="GO:0042025">
    <property type="term" value="C:host cell nucleus"/>
    <property type="evidence" value="ECO:0007669"/>
    <property type="project" value="UniProtKB-SubCell"/>
</dbReference>
<dbReference type="GO" id="GO:0016020">
    <property type="term" value="C:membrane"/>
    <property type="evidence" value="ECO:0007669"/>
    <property type="project" value="UniProtKB-KW"/>
</dbReference>
<dbReference type="GO" id="GO:0055036">
    <property type="term" value="C:virion membrane"/>
    <property type="evidence" value="ECO:0007669"/>
    <property type="project" value="UniProtKB-SubCell"/>
</dbReference>
<dbReference type="GO" id="GO:0003723">
    <property type="term" value="F:RNA binding"/>
    <property type="evidence" value="ECO:0007669"/>
    <property type="project" value="UniProtKB-UniRule"/>
</dbReference>
<dbReference type="GO" id="GO:0039660">
    <property type="term" value="F:structural constituent of virion"/>
    <property type="evidence" value="ECO:0007669"/>
    <property type="project" value="UniProtKB-UniRule"/>
</dbReference>
<dbReference type="GO" id="GO:0046761">
    <property type="term" value="P:viral budding from plasma membrane"/>
    <property type="evidence" value="ECO:0007669"/>
    <property type="project" value="UniProtKB-UniRule"/>
</dbReference>
<dbReference type="FunFam" id="1.10.10.180:FF:000001">
    <property type="entry name" value="Matrix protein 1"/>
    <property type="match status" value="1"/>
</dbReference>
<dbReference type="FunFam" id="1.20.91.10:FF:000001">
    <property type="entry name" value="Matrix protein 1"/>
    <property type="match status" value="1"/>
</dbReference>
<dbReference type="Gene3D" id="1.10.10.180">
    <property type="match status" value="1"/>
</dbReference>
<dbReference type="Gene3D" id="1.20.91.10">
    <property type="match status" value="1"/>
</dbReference>
<dbReference type="HAMAP" id="MF_04068">
    <property type="entry name" value="INFV_M1"/>
    <property type="match status" value="1"/>
</dbReference>
<dbReference type="InterPro" id="IPR036039">
    <property type="entry name" value="Flu_matrix_M1"/>
</dbReference>
<dbReference type="InterPro" id="IPR013188">
    <property type="entry name" value="Flu_matrix_M1_C"/>
</dbReference>
<dbReference type="InterPro" id="IPR001561">
    <property type="entry name" value="Flu_matrix_M1_N"/>
</dbReference>
<dbReference type="InterPro" id="IPR015423">
    <property type="entry name" value="Flu_matrix_M1_N_sub1"/>
</dbReference>
<dbReference type="InterPro" id="IPR015799">
    <property type="entry name" value="Flu_matrix_M1_N_sub2"/>
</dbReference>
<dbReference type="InterPro" id="IPR037533">
    <property type="entry name" value="INFV_M1"/>
</dbReference>
<dbReference type="Pfam" id="PF00598">
    <property type="entry name" value="Flu_M1"/>
    <property type="match status" value="1"/>
</dbReference>
<dbReference type="Pfam" id="PF08289">
    <property type="entry name" value="Flu_M1_C"/>
    <property type="match status" value="1"/>
</dbReference>
<dbReference type="SMART" id="SM00759">
    <property type="entry name" value="Flu_M1_C"/>
    <property type="match status" value="1"/>
</dbReference>
<dbReference type="SUPFAM" id="SSF48145">
    <property type="entry name" value="Influenza virus matrix protein M1"/>
    <property type="match status" value="1"/>
</dbReference>
<organismHost>
    <name type="scientific">Aves</name>
    <dbReference type="NCBI Taxonomy" id="8782"/>
</organismHost>
<organismHost>
    <name type="scientific">Cetacea</name>
    <name type="common">whales</name>
    <dbReference type="NCBI Taxonomy" id="9721"/>
</organismHost>
<organismHost>
    <name type="scientific">Homo sapiens</name>
    <name type="common">Human</name>
    <dbReference type="NCBI Taxonomy" id="9606"/>
</organismHost>
<organismHost>
    <name type="scientific">Phocidae</name>
    <name type="common">true seals</name>
    <dbReference type="NCBI Taxonomy" id="9709"/>
</organismHost>
<organismHost>
    <name type="scientific">Sus scrofa</name>
    <name type="common">Pig</name>
    <dbReference type="NCBI Taxonomy" id="9823"/>
</organismHost>
<sequence length="252" mass="27804">MSLLTEVETYVLSIVPSGPLKAEIAQRLEDVFAGKNTDLEALMEWLKTRPILSPLTKGILGFVFTLTVPSERGLQRRRFVQNALNGNGDPNNMDRAVKLYRKLKREITFHGAKEIALSYSAGALASCMGLIYNRMGAVTTEVAFGLVCATCEQIADSQHRSHRQMVATTNPLIRHENRMVLASTTAKAMEQMAGSSEQAAEAMEVASQARQMVQAMRAIGTHPSSSAGLKDDLLENLQAYQKRMGVQMQRFK</sequence>
<proteinExistence type="inferred from homology"/>
<evidence type="ECO:0000255" key="1">
    <source>
        <dbReference type="HAMAP-Rule" id="MF_04068"/>
    </source>
</evidence>